<evidence type="ECO:0000255" key="1"/>
<evidence type="ECO:0000305" key="2"/>
<sequence>MTAPAICNTTETVHGIATSLGAVARQASLPRIVGTVVGITVLVVVALLVPVPTAVELRDWAKSLGAWFPLAFLLVHTVVTVPPFPRTAFTLAAGLLFGSVVGVFIAVVGSTASAVIAMLLVRATGWQLNSLVRRRAINRLDERLRERGWLAILSLRLIPVVPFAAINYAAGASGVRILSFAWATLAGLLPGTAAVVILGDAFAGSGSPLLILVSVCTGALGLTGLVYEIRNYRRQHRRMPGYDDPVREPALI</sequence>
<gene>
    <name type="ordered locus">Rv1491c</name>
    <name type="ORF">MTCY277.13c</name>
</gene>
<proteinExistence type="inferred from homology"/>
<protein>
    <recommendedName>
        <fullName>TVP38/TMEM64 family membrane protein Rv1491c</fullName>
    </recommendedName>
</protein>
<reference key="1">
    <citation type="journal article" date="1998" name="Nature">
        <title>Deciphering the biology of Mycobacterium tuberculosis from the complete genome sequence.</title>
        <authorList>
            <person name="Cole S.T."/>
            <person name="Brosch R."/>
            <person name="Parkhill J."/>
            <person name="Garnier T."/>
            <person name="Churcher C.M."/>
            <person name="Harris D.E."/>
            <person name="Gordon S.V."/>
            <person name="Eiglmeier K."/>
            <person name="Gas S."/>
            <person name="Barry C.E. III"/>
            <person name="Tekaia F."/>
            <person name="Badcock K."/>
            <person name="Basham D."/>
            <person name="Brown D."/>
            <person name="Chillingworth T."/>
            <person name="Connor R."/>
            <person name="Davies R.M."/>
            <person name="Devlin K."/>
            <person name="Feltwell T."/>
            <person name="Gentles S."/>
            <person name="Hamlin N."/>
            <person name="Holroyd S."/>
            <person name="Hornsby T."/>
            <person name="Jagels K."/>
            <person name="Krogh A."/>
            <person name="McLean J."/>
            <person name="Moule S."/>
            <person name="Murphy L.D."/>
            <person name="Oliver S."/>
            <person name="Osborne J."/>
            <person name="Quail M.A."/>
            <person name="Rajandream M.A."/>
            <person name="Rogers J."/>
            <person name="Rutter S."/>
            <person name="Seeger K."/>
            <person name="Skelton S."/>
            <person name="Squares S."/>
            <person name="Squares R."/>
            <person name="Sulston J.E."/>
            <person name="Taylor K."/>
            <person name="Whitehead S."/>
            <person name="Barrell B.G."/>
        </authorList>
    </citation>
    <scope>NUCLEOTIDE SEQUENCE [LARGE SCALE GENOMIC DNA]</scope>
    <source>
        <strain>ATCC 25618 / H37Rv</strain>
    </source>
</reference>
<organism>
    <name type="scientific">Mycobacterium tuberculosis (strain ATCC 25618 / H37Rv)</name>
    <dbReference type="NCBI Taxonomy" id="83332"/>
    <lineage>
        <taxon>Bacteria</taxon>
        <taxon>Bacillati</taxon>
        <taxon>Actinomycetota</taxon>
        <taxon>Actinomycetes</taxon>
        <taxon>Mycobacteriales</taxon>
        <taxon>Mycobacteriaceae</taxon>
        <taxon>Mycobacterium</taxon>
        <taxon>Mycobacterium tuberculosis complex</taxon>
    </lineage>
</organism>
<name>Y1491_MYCTU</name>
<dbReference type="EMBL" id="AL123456">
    <property type="protein sequence ID" value="CCP44252.1"/>
    <property type="molecule type" value="Genomic_DNA"/>
</dbReference>
<dbReference type="PIR" id="F70711">
    <property type="entry name" value="F70711"/>
</dbReference>
<dbReference type="RefSeq" id="NP_216007.1">
    <property type="nucleotide sequence ID" value="NC_000962.3"/>
</dbReference>
<dbReference type="RefSeq" id="WP_003407583.1">
    <property type="nucleotide sequence ID" value="NZ_NVQJ01000004.1"/>
</dbReference>
<dbReference type="FunCoup" id="P9WFS3">
    <property type="interactions" value="69"/>
</dbReference>
<dbReference type="STRING" id="83332.Rv1491c"/>
<dbReference type="PaxDb" id="83332-Rv1491c"/>
<dbReference type="DNASU" id="886513"/>
<dbReference type="GeneID" id="886513"/>
<dbReference type="KEGG" id="mtu:Rv1491c"/>
<dbReference type="KEGG" id="mtv:RVBD_1491c"/>
<dbReference type="TubercuList" id="Rv1491c"/>
<dbReference type="eggNOG" id="COG0398">
    <property type="taxonomic scope" value="Bacteria"/>
</dbReference>
<dbReference type="InParanoid" id="P9WFS3"/>
<dbReference type="OrthoDB" id="5242213at2"/>
<dbReference type="PhylomeDB" id="P9WFS3"/>
<dbReference type="Proteomes" id="UP000001584">
    <property type="component" value="Chromosome"/>
</dbReference>
<dbReference type="GO" id="GO:0005886">
    <property type="term" value="C:plasma membrane"/>
    <property type="evidence" value="ECO:0000318"/>
    <property type="project" value="GO_Central"/>
</dbReference>
<dbReference type="InterPro" id="IPR015414">
    <property type="entry name" value="TMEM64"/>
</dbReference>
<dbReference type="InterPro" id="IPR032816">
    <property type="entry name" value="VTT_dom"/>
</dbReference>
<dbReference type="PANTHER" id="PTHR12677">
    <property type="entry name" value="GOLGI APPARATUS MEMBRANE PROTEIN TVP38-RELATED"/>
    <property type="match status" value="1"/>
</dbReference>
<dbReference type="PANTHER" id="PTHR12677:SF59">
    <property type="entry name" value="GOLGI APPARATUS MEMBRANE PROTEIN TVP38-RELATED"/>
    <property type="match status" value="1"/>
</dbReference>
<dbReference type="Pfam" id="PF09335">
    <property type="entry name" value="VTT_dom"/>
    <property type="match status" value="1"/>
</dbReference>
<keyword id="KW-1003">Cell membrane</keyword>
<keyword id="KW-0472">Membrane</keyword>
<keyword id="KW-1185">Reference proteome</keyword>
<keyword id="KW-0812">Transmembrane</keyword>
<keyword id="KW-1133">Transmembrane helix</keyword>
<accession>P9WFS3</accession>
<accession>L0T706</accession>
<accession>P67117</accession>
<accession>P71772</accession>
<feature type="chain" id="PRO_0000198638" description="TVP38/TMEM64 family membrane protein Rv1491c">
    <location>
        <begin position="1"/>
        <end position="252"/>
    </location>
</feature>
<feature type="transmembrane region" description="Helical" evidence="1">
    <location>
        <begin position="32"/>
        <end position="52"/>
    </location>
</feature>
<feature type="transmembrane region" description="Helical" evidence="1">
    <location>
        <begin position="64"/>
        <end position="84"/>
    </location>
</feature>
<feature type="transmembrane region" description="Helical" evidence="1">
    <location>
        <begin position="88"/>
        <end position="108"/>
    </location>
</feature>
<feature type="transmembrane region" description="Helical" evidence="1">
    <location>
        <begin position="149"/>
        <end position="169"/>
    </location>
</feature>
<feature type="transmembrane region" description="Helical" evidence="1">
    <location>
        <begin position="177"/>
        <end position="197"/>
    </location>
</feature>
<feature type="transmembrane region" description="Helical" evidence="1">
    <location>
        <begin position="209"/>
        <end position="229"/>
    </location>
</feature>
<comment type="subcellular location">
    <subcellularLocation>
        <location evidence="2">Cell membrane</location>
        <topology evidence="2">Multi-pass membrane protein</topology>
    </subcellularLocation>
</comment>
<comment type="similarity">
    <text evidence="2">Belongs to the TVP38/TMEM64 family.</text>
</comment>